<name>FOLD_AZOC5</name>
<feature type="chain" id="PRO_0000318783" description="Bifunctional protein FolD">
    <location>
        <begin position="1"/>
        <end position="290"/>
    </location>
</feature>
<feature type="binding site" evidence="1">
    <location>
        <begin position="167"/>
        <end position="169"/>
    </location>
    <ligand>
        <name>NADP(+)</name>
        <dbReference type="ChEBI" id="CHEBI:58349"/>
    </ligand>
</feature>
<feature type="binding site" evidence="1">
    <location>
        <position position="192"/>
    </location>
    <ligand>
        <name>NADP(+)</name>
        <dbReference type="ChEBI" id="CHEBI:58349"/>
    </ligand>
</feature>
<feature type="binding site" evidence="1">
    <location>
        <position position="233"/>
    </location>
    <ligand>
        <name>NADP(+)</name>
        <dbReference type="ChEBI" id="CHEBI:58349"/>
    </ligand>
</feature>
<keyword id="KW-0028">Amino-acid biosynthesis</keyword>
<keyword id="KW-0368">Histidine biosynthesis</keyword>
<keyword id="KW-0378">Hydrolase</keyword>
<keyword id="KW-0486">Methionine biosynthesis</keyword>
<keyword id="KW-0511">Multifunctional enzyme</keyword>
<keyword id="KW-0521">NADP</keyword>
<keyword id="KW-0554">One-carbon metabolism</keyword>
<keyword id="KW-0560">Oxidoreductase</keyword>
<keyword id="KW-0658">Purine biosynthesis</keyword>
<keyword id="KW-1185">Reference proteome</keyword>
<comment type="function">
    <text evidence="1">Catalyzes the oxidation of 5,10-methylenetetrahydrofolate to 5,10-methenyltetrahydrofolate and then the hydrolysis of 5,10-methenyltetrahydrofolate to 10-formyltetrahydrofolate.</text>
</comment>
<comment type="catalytic activity">
    <reaction evidence="1">
        <text>(6R)-5,10-methylene-5,6,7,8-tetrahydrofolate + NADP(+) = (6R)-5,10-methenyltetrahydrofolate + NADPH</text>
        <dbReference type="Rhea" id="RHEA:22812"/>
        <dbReference type="ChEBI" id="CHEBI:15636"/>
        <dbReference type="ChEBI" id="CHEBI:57455"/>
        <dbReference type="ChEBI" id="CHEBI:57783"/>
        <dbReference type="ChEBI" id="CHEBI:58349"/>
        <dbReference type="EC" id="1.5.1.5"/>
    </reaction>
</comment>
<comment type="catalytic activity">
    <reaction evidence="1">
        <text>(6R)-5,10-methenyltetrahydrofolate + H2O = (6R)-10-formyltetrahydrofolate + H(+)</text>
        <dbReference type="Rhea" id="RHEA:23700"/>
        <dbReference type="ChEBI" id="CHEBI:15377"/>
        <dbReference type="ChEBI" id="CHEBI:15378"/>
        <dbReference type="ChEBI" id="CHEBI:57455"/>
        <dbReference type="ChEBI" id="CHEBI:195366"/>
        <dbReference type="EC" id="3.5.4.9"/>
    </reaction>
</comment>
<comment type="pathway">
    <text evidence="1">One-carbon metabolism; tetrahydrofolate interconversion.</text>
</comment>
<comment type="subunit">
    <text evidence="1">Homodimer.</text>
</comment>
<comment type="similarity">
    <text evidence="1">Belongs to the tetrahydrofolate dehydrogenase/cyclohydrolase family.</text>
</comment>
<proteinExistence type="inferred from homology"/>
<accession>A8I5P5</accession>
<dbReference type="EC" id="1.5.1.5" evidence="1"/>
<dbReference type="EC" id="3.5.4.9" evidence="1"/>
<dbReference type="EMBL" id="AP009384">
    <property type="protein sequence ID" value="BAF88304.1"/>
    <property type="molecule type" value="Genomic_DNA"/>
</dbReference>
<dbReference type="SMR" id="A8I5P5"/>
<dbReference type="STRING" id="438753.AZC_2306"/>
<dbReference type="KEGG" id="azc:AZC_2306"/>
<dbReference type="eggNOG" id="COG0190">
    <property type="taxonomic scope" value="Bacteria"/>
</dbReference>
<dbReference type="HOGENOM" id="CLU_034045_2_1_5"/>
<dbReference type="UniPathway" id="UPA00193"/>
<dbReference type="Proteomes" id="UP000000270">
    <property type="component" value="Chromosome"/>
</dbReference>
<dbReference type="GO" id="GO:0005829">
    <property type="term" value="C:cytosol"/>
    <property type="evidence" value="ECO:0007669"/>
    <property type="project" value="TreeGrafter"/>
</dbReference>
<dbReference type="GO" id="GO:0004477">
    <property type="term" value="F:methenyltetrahydrofolate cyclohydrolase activity"/>
    <property type="evidence" value="ECO:0007669"/>
    <property type="project" value="UniProtKB-UniRule"/>
</dbReference>
<dbReference type="GO" id="GO:0004488">
    <property type="term" value="F:methylenetetrahydrofolate dehydrogenase (NADP+) activity"/>
    <property type="evidence" value="ECO:0007669"/>
    <property type="project" value="UniProtKB-UniRule"/>
</dbReference>
<dbReference type="GO" id="GO:0000105">
    <property type="term" value="P:L-histidine biosynthetic process"/>
    <property type="evidence" value="ECO:0007669"/>
    <property type="project" value="UniProtKB-KW"/>
</dbReference>
<dbReference type="GO" id="GO:0009086">
    <property type="term" value="P:methionine biosynthetic process"/>
    <property type="evidence" value="ECO:0007669"/>
    <property type="project" value="UniProtKB-KW"/>
</dbReference>
<dbReference type="GO" id="GO:0006164">
    <property type="term" value="P:purine nucleotide biosynthetic process"/>
    <property type="evidence" value="ECO:0007669"/>
    <property type="project" value="UniProtKB-KW"/>
</dbReference>
<dbReference type="GO" id="GO:0035999">
    <property type="term" value="P:tetrahydrofolate interconversion"/>
    <property type="evidence" value="ECO:0007669"/>
    <property type="project" value="UniProtKB-UniRule"/>
</dbReference>
<dbReference type="CDD" id="cd01080">
    <property type="entry name" value="NAD_bind_m-THF_DH_Cyclohyd"/>
    <property type="match status" value="1"/>
</dbReference>
<dbReference type="FunFam" id="3.40.50.720:FF:000006">
    <property type="entry name" value="Bifunctional protein FolD"/>
    <property type="match status" value="1"/>
</dbReference>
<dbReference type="FunFam" id="3.40.50.10860:FF:000005">
    <property type="entry name" value="C-1-tetrahydrofolate synthase, cytoplasmic, putative"/>
    <property type="match status" value="1"/>
</dbReference>
<dbReference type="Gene3D" id="3.40.50.10860">
    <property type="entry name" value="Leucine Dehydrogenase, chain A, domain 1"/>
    <property type="match status" value="1"/>
</dbReference>
<dbReference type="Gene3D" id="3.40.50.720">
    <property type="entry name" value="NAD(P)-binding Rossmann-like Domain"/>
    <property type="match status" value="1"/>
</dbReference>
<dbReference type="HAMAP" id="MF_01576">
    <property type="entry name" value="THF_DHG_CYH"/>
    <property type="match status" value="1"/>
</dbReference>
<dbReference type="InterPro" id="IPR046346">
    <property type="entry name" value="Aminoacid_DH-like_N_sf"/>
</dbReference>
<dbReference type="InterPro" id="IPR036291">
    <property type="entry name" value="NAD(P)-bd_dom_sf"/>
</dbReference>
<dbReference type="InterPro" id="IPR000672">
    <property type="entry name" value="THF_DH/CycHdrlase"/>
</dbReference>
<dbReference type="InterPro" id="IPR020630">
    <property type="entry name" value="THF_DH/CycHdrlase_cat_dom"/>
</dbReference>
<dbReference type="InterPro" id="IPR020867">
    <property type="entry name" value="THF_DH/CycHdrlase_CS"/>
</dbReference>
<dbReference type="InterPro" id="IPR020631">
    <property type="entry name" value="THF_DH/CycHdrlase_NAD-bd_dom"/>
</dbReference>
<dbReference type="NCBIfam" id="NF008058">
    <property type="entry name" value="PRK10792.1"/>
    <property type="match status" value="1"/>
</dbReference>
<dbReference type="NCBIfam" id="NF010783">
    <property type="entry name" value="PRK14186.1"/>
    <property type="match status" value="1"/>
</dbReference>
<dbReference type="NCBIfam" id="NF010785">
    <property type="entry name" value="PRK14188.1"/>
    <property type="match status" value="1"/>
</dbReference>
<dbReference type="PANTHER" id="PTHR48099:SF5">
    <property type="entry name" value="C-1-TETRAHYDROFOLATE SYNTHASE, CYTOPLASMIC"/>
    <property type="match status" value="1"/>
</dbReference>
<dbReference type="PANTHER" id="PTHR48099">
    <property type="entry name" value="C-1-TETRAHYDROFOLATE SYNTHASE, CYTOPLASMIC-RELATED"/>
    <property type="match status" value="1"/>
</dbReference>
<dbReference type="Pfam" id="PF00763">
    <property type="entry name" value="THF_DHG_CYH"/>
    <property type="match status" value="1"/>
</dbReference>
<dbReference type="Pfam" id="PF02882">
    <property type="entry name" value="THF_DHG_CYH_C"/>
    <property type="match status" value="1"/>
</dbReference>
<dbReference type="PRINTS" id="PR00085">
    <property type="entry name" value="THFDHDRGNASE"/>
</dbReference>
<dbReference type="SUPFAM" id="SSF53223">
    <property type="entry name" value="Aminoacid dehydrogenase-like, N-terminal domain"/>
    <property type="match status" value="1"/>
</dbReference>
<dbReference type="SUPFAM" id="SSF51735">
    <property type="entry name" value="NAD(P)-binding Rossmann-fold domains"/>
    <property type="match status" value="1"/>
</dbReference>
<dbReference type="PROSITE" id="PS00766">
    <property type="entry name" value="THF_DHG_CYH_1"/>
    <property type="match status" value="1"/>
</dbReference>
<dbReference type="PROSITE" id="PS00767">
    <property type="entry name" value="THF_DHG_CYH_2"/>
    <property type="match status" value="1"/>
</dbReference>
<gene>
    <name evidence="1" type="primary">folD</name>
    <name type="ordered locus">AZC_2306</name>
</gene>
<evidence type="ECO:0000255" key="1">
    <source>
        <dbReference type="HAMAP-Rule" id="MF_01576"/>
    </source>
</evidence>
<reference key="1">
    <citation type="submission" date="2007-04" db="EMBL/GenBank/DDBJ databases">
        <title>Complete genome sequence of the nitrogen-fixing bacterium Azorhizobium caulinodans ORS571.</title>
        <authorList>
            <person name="Lee K.B."/>
            <person name="Backer P.D."/>
            <person name="Aono T."/>
            <person name="Liu C.T."/>
            <person name="Suzuki S."/>
            <person name="Suzuki T."/>
            <person name="Kaneko T."/>
            <person name="Yamada M."/>
            <person name="Tabata S."/>
            <person name="Kupfer D.M."/>
            <person name="Najar F.Z."/>
            <person name="Wiley G.B."/>
            <person name="Roe B."/>
            <person name="Binnewies T."/>
            <person name="Ussery D."/>
            <person name="Vereecke D."/>
            <person name="Gevers D."/>
            <person name="Holsters M."/>
            <person name="Oyaizu H."/>
        </authorList>
    </citation>
    <scope>NUCLEOTIDE SEQUENCE [LARGE SCALE GENOMIC DNA]</scope>
    <source>
        <strain>ATCC 43989 / DSM 5975 / JCM 20966 / LMG 6465 / NBRC 14845 / NCIMB 13405 / ORS 571</strain>
    </source>
</reference>
<protein>
    <recommendedName>
        <fullName evidence="1">Bifunctional protein FolD</fullName>
    </recommendedName>
    <domain>
        <recommendedName>
            <fullName evidence="1">Methylenetetrahydrofolate dehydrogenase</fullName>
            <ecNumber evidence="1">1.5.1.5</ecNumber>
        </recommendedName>
    </domain>
    <domain>
        <recommendedName>
            <fullName evidence="1">Methenyltetrahydrofolate cyclohydrolase</fullName>
            <ecNumber evidence="1">3.5.4.9</ecNumber>
        </recommendedName>
    </domain>
</protein>
<sequence>MIETKPIDGKAFAAGLRARIAEEVAVLVRDHDLKPGLAVVLVGEDPASQVYVRNKAAQTAEAGMASFEYKLPADTAEADLLALVEKLNADPAVNGILVQLPLPAHLDSMKVLAAIDPAKDVDGFHVVNAGRLAVGLDALVPCTPLGCVMLLKHHLGNLSGLNAVVVGRSNIVGKPAAQLLLREDCTVTIAHSRTRDLPGMCRQADILVAAVGRPEMVRGDWIKPGATVIDVGINRVPKADGKTRLVGDVAYEEALGVAGLITPVPGGVGPMTIACLLQNTLTAARRQKGL</sequence>
<organism>
    <name type="scientific">Azorhizobium caulinodans (strain ATCC 43989 / DSM 5975 / JCM 20966 / LMG 6465 / NBRC 14845 / NCIMB 13405 / ORS 571)</name>
    <dbReference type="NCBI Taxonomy" id="438753"/>
    <lineage>
        <taxon>Bacteria</taxon>
        <taxon>Pseudomonadati</taxon>
        <taxon>Pseudomonadota</taxon>
        <taxon>Alphaproteobacteria</taxon>
        <taxon>Hyphomicrobiales</taxon>
        <taxon>Xanthobacteraceae</taxon>
        <taxon>Azorhizobium</taxon>
    </lineage>
</organism>